<dbReference type="EMBL" id="CP000435">
    <property type="protein sequence ID" value="ABI46080.1"/>
    <property type="molecule type" value="Genomic_DNA"/>
</dbReference>
<dbReference type="RefSeq" id="WP_011620683.1">
    <property type="nucleotide sequence ID" value="NC_008319.1"/>
</dbReference>
<dbReference type="SMR" id="Q0I6E0"/>
<dbReference type="STRING" id="64471.sync_2794"/>
<dbReference type="KEGG" id="syg:sync_2794"/>
<dbReference type="eggNOG" id="COG0359">
    <property type="taxonomic scope" value="Bacteria"/>
</dbReference>
<dbReference type="HOGENOM" id="CLU_078938_5_1_3"/>
<dbReference type="OrthoDB" id="9788336at2"/>
<dbReference type="Proteomes" id="UP000001961">
    <property type="component" value="Chromosome"/>
</dbReference>
<dbReference type="GO" id="GO:1990904">
    <property type="term" value="C:ribonucleoprotein complex"/>
    <property type="evidence" value="ECO:0007669"/>
    <property type="project" value="UniProtKB-KW"/>
</dbReference>
<dbReference type="GO" id="GO:0005840">
    <property type="term" value="C:ribosome"/>
    <property type="evidence" value="ECO:0007669"/>
    <property type="project" value="UniProtKB-KW"/>
</dbReference>
<dbReference type="GO" id="GO:0019843">
    <property type="term" value="F:rRNA binding"/>
    <property type="evidence" value="ECO:0007669"/>
    <property type="project" value="UniProtKB-UniRule"/>
</dbReference>
<dbReference type="GO" id="GO:0003735">
    <property type="term" value="F:structural constituent of ribosome"/>
    <property type="evidence" value="ECO:0007669"/>
    <property type="project" value="InterPro"/>
</dbReference>
<dbReference type="GO" id="GO:0006412">
    <property type="term" value="P:translation"/>
    <property type="evidence" value="ECO:0007669"/>
    <property type="project" value="UniProtKB-UniRule"/>
</dbReference>
<dbReference type="Gene3D" id="3.10.430.100">
    <property type="entry name" value="Ribosomal protein L9, C-terminal domain"/>
    <property type="match status" value="1"/>
</dbReference>
<dbReference type="Gene3D" id="3.40.5.10">
    <property type="entry name" value="Ribosomal protein L9, N-terminal domain"/>
    <property type="match status" value="1"/>
</dbReference>
<dbReference type="HAMAP" id="MF_00503">
    <property type="entry name" value="Ribosomal_bL9"/>
    <property type="match status" value="1"/>
</dbReference>
<dbReference type="InterPro" id="IPR000244">
    <property type="entry name" value="Ribosomal_bL9"/>
</dbReference>
<dbReference type="InterPro" id="IPR009027">
    <property type="entry name" value="Ribosomal_bL9/RNase_H1_N"/>
</dbReference>
<dbReference type="InterPro" id="IPR020594">
    <property type="entry name" value="Ribosomal_bL9_bac/chp"/>
</dbReference>
<dbReference type="InterPro" id="IPR020069">
    <property type="entry name" value="Ribosomal_bL9_C"/>
</dbReference>
<dbReference type="InterPro" id="IPR036791">
    <property type="entry name" value="Ribosomal_bL9_C_sf"/>
</dbReference>
<dbReference type="InterPro" id="IPR020070">
    <property type="entry name" value="Ribosomal_bL9_N"/>
</dbReference>
<dbReference type="InterPro" id="IPR036935">
    <property type="entry name" value="Ribosomal_bL9_N_sf"/>
</dbReference>
<dbReference type="NCBIfam" id="TIGR00158">
    <property type="entry name" value="L9"/>
    <property type="match status" value="1"/>
</dbReference>
<dbReference type="PANTHER" id="PTHR21368">
    <property type="entry name" value="50S RIBOSOMAL PROTEIN L9"/>
    <property type="match status" value="1"/>
</dbReference>
<dbReference type="Pfam" id="PF03948">
    <property type="entry name" value="Ribosomal_L9_C"/>
    <property type="match status" value="1"/>
</dbReference>
<dbReference type="Pfam" id="PF01281">
    <property type="entry name" value="Ribosomal_L9_N"/>
    <property type="match status" value="1"/>
</dbReference>
<dbReference type="SUPFAM" id="SSF55658">
    <property type="entry name" value="L9 N-domain-like"/>
    <property type="match status" value="1"/>
</dbReference>
<dbReference type="SUPFAM" id="SSF55653">
    <property type="entry name" value="Ribosomal protein L9 C-domain"/>
    <property type="match status" value="1"/>
</dbReference>
<dbReference type="PROSITE" id="PS00651">
    <property type="entry name" value="RIBOSOMAL_L9"/>
    <property type="match status" value="1"/>
</dbReference>
<keyword id="KW-1185">Reference proteome</keyword>
<keyword id="KW-0687">Ribonucleoprotein</keyword>
<keyword id="KW-0689">Ribosomal protein</keyword>
<keyword id="KW-0694">RNA-binding</keyword>
<keyword id="KW-0699">rRNA-binding</keyword>
<name>RL9_SYNS3</name>
<feature type="chain" id="PRO_1000014878" description="Large ribosomal subunit protein bL9">
    <location>
        <begin position="1"/>
        <end position="152"/>
    </location>
</feature>
<sequence>MAKRVQVVLNEDILSLGRNGDLVDVAPGYARNFLLPFGKAVPVTPAVMKQVEHRRAKEAERQATLKQDAVAFRTALDTIGRFTVKKQTGGDDVLFGTVTNGDVAEAIESATKKEVDRRDITVPDIHRTGSYKVQVKLHSEVTAEINLEVVSY</sequence>
<accession>Q0I6E0</accession>
<protein>
    <recommendedName>
        <fullName evidence="1">Large ribosomal subunit protein bL9</fullName>
    </recommendedName>
    <alternativeName>
        <fullName evidence="2">50S ribosomal protein L9</fullName>
    </alternativeName>
</protein>
<proteinExistence type="inferred from homology"/>
<comment type="function">
    <text evidence="1">Binds to the 23S rRNA.</text>
</comment>
<comment type="similarity">
    <text evidence="1">Belongs to the bacterial ribosomal protein bL9 family.</text>
</comment>
<evidence type="ECO:0000255" key="1">
    <source>
        <dbReference type="HAMAP-Rule" id="MF_00503"/>
    </source>
</evidence>
<evidence type="ECO:0000305" key="2"/>
<reference key="1">
    <citation type="journal article" date="2006" name="Proc. Natl. Acad. Sci. U.S.A.">
        <title>Genome sequence of Synechococcus CC9311: insights into adaptation to a coastal environment.</title>
        <authorList>
            <person name="Palenik B."/>
            <person name="Ren Q."/>
            <person name="Dupont C.L."/>
            <person name="Myers G.S."/>
            <person name="Heidelberg J.F."/>
            <person name="Badger J.H."/>
            <person name="Madupu R."/>
            <person name="Nelson W.C."/>
            <person name="Brinkac L.M."/>
            <person name="Dodson R.J."/>
            <person name="Durkin A.S."/>
            <person name="Daugherty S.C."/>
            <person name="Sullivan S.A."/>
            <person name="Khouri H."/>
            <person name="Mohamoud Y."/>
            <person name="Halpin R."/>
            <person name="Paulsen I.T."/>
        </authorList>
    </citation>
    <scope>NUCLEOTIDE SEQUENCE [LARGE SCALE GENOMIC DNA]</scope>
    <source>
        <strain>CC9311</strain>
    </source>
</reference>
<gene>
    <name evidence="1" type="primary">rplI</name>
    <name evidence="1" type="synonym">rpl9</name>
    <name type="ordered locus">sync_2794</name>
</gene>
<organism>
    <name type="scientific">Synechococcus sp. (strain CC9311)</name>
    <dbReference type="NCBI Taxonomy" id="64471"/>
    <lineage>
        <taxon>Bacteria</taxon>
        <taxon>Bacillati</taxon>
        <taxon>Cyanobacteriota</taxon>
        <taxon>Cyanophyceae</taxon>
        <taxon>Synechococcales</taxon>
        <taxon>Synechococcaceae</taxon>
        <taxon>Synechococcus</taxon>
    </lineage>
</organism>